<dbReference type="EMBL" id="EU532762">
    <property type="protein sequence ID" value="ACB37440.1"/>
    <property type="molecule type" value="Genomic_DNA"/>
</dbReference>
<dbReference type="SMR" id="B2CPI5"/>
<dbReference type="GO" id="GO:0005886">
    <property type="term" value="C:plasma membrane"/>
    <property type="evidence" value="ECO:0007669"/>
    <property type="project" value="UniProtKB-SubCell"/>
</dbReference>
<dbReference type="GO" id="GO:0005315">
    <property type="term" value="F:phosphate transmembrane transporter activity"/>
    <property type="evidence" value="ECO:0007669"/>
    <property type="project" value="InterPro"/>
</dbReference>
<dbReference type="GO" id="GO:0015293">
    <property type="term" value="F:symporter activity"/>
    <property type="evidence" value="ECO:0007669"/>
    <property type="project" value="UniProtKB-KW"/>
</dbReference>
<dbReference type="GO" id="GO:0006817">
    <property type="term" value="P:phosphate ion transport"/>
    <property type="evidence" value="ECO:0007669"/>
    <property type="project" value="UniProtKB-KW"/>
</dbReference>
<dbReference type="GO" id="GO:0009610">
    <property type="term" value="P:response to symbiotic fungus"/>
    <property type="evidence" value="ECO:0000270"/>
    <property type="project" value="UniProtKB"/>
</dbReference>
<dbReference type="CDD" id="cd17364">
    <property type="entry name" value="MFS_PhT"/>
    <property type="match status" value="1"/>
</dbReference>
<dbReference type="FunFam" id="1.20.1250.20:FF:000175">
    <property type="entry name" value="Inorganic phosphate transporter 1-6"/>
    <property type="match status" value="1"/>
</dbReference>
<dbReference type="Gene3D" id="1.20.1250.20">
    <property type="entry name" value="MFS general substrate transporter like domains"/>
    <property type="match status" value="1"/>
</dbReference>
<dbReference type="InterPro" id="IPR020846">
    <property type="entry name" value="MFS_dom"/>
</dbReference>
<dbReference type="InterPro" id="IPR005828">
    <property type="entry name" value="MFS_sugar_transport-like"/>
</dbReference>
<dbReference type="InterPro" id="IPR036259">
    <property type="entry name" value="MFS_trans_sf"/>
</dbReference>
<dbReference type="InterPro" id="IPR004738">
    <property type="entry name" value="Phos_permease"/>
</dbReference>
<dbReference type="NCBIfam" id="TIGR00887">
    <property type="entry name" value="2A0109"/>
    <property type="match status" value="1"/>
</dbReference>
<dbReference type="PANTHER" id="PTHR24064">
    <property type="entry name" value="SOLUTE CARRIER FAMILY 22 MEMBER"/>
    <property type="match status" value="1"/>
</dbReference>
<dbReference type="Pfam" id="PF00083">
    <property type="entry name" value="Sugar_tr"/>
    <property type="match status" value="1"/>
</dbReference>
<dbReference type="SUPFAM" id="SSF103473">
    <property type="entry name" value="MFS general substrate transporter"/>
    <property type="match status" value="1"/>
</dbReference>
<dbReference type="PROSITE" id="PS50850">
    <property type="entry name" value="MFS"/>
    <property type="match status" value="1"/>
</dbReference>
<comment type="function">
    <text evidence="7">Low-affinity transporter for external inorganic phosphate (Pi) probably involved in the acquisition of phosphate released by arbuscular mycorrhizal (AM) fungi during AM symbiosis.</text>
</comment>
<comment type="catalytic activity">
    <reaction evidence="1">
        <text>phosphate(in) + H(+)(in) = phosphate(out) + H(+)(out)</text>
        <dbReference type="Rhea" id="RHEA:29939"/>
        <dbReference type="ChEBI" id="CHEBI:15378"/>
        <dbReference type="ChEBI" id="CHEBI:43474"/>
    </reaction>
    <physiologicalReaction direction="right-to-left" evidence="1">
        <dbReference type="Rhea" id="RHEA:29941"/>
    </physiologicalReaction>
</comment>
<comment type="subcellular location">
    <subcellularLocation>
        <location evidence="1">Cell membrane</location>
        <topology evidence="2">Multi-pass membrane protein</topology>
    </subcellularLocation>
    <text evidence="1">Present on the periarbuscular membrane in cells containing arbuscules during arbuscular mycorrhizal (AM) symbiosis with AM fungi.</text>
</comment>
<comment type="tissue specificity">
    <text evidence="4">Expressed at low levels in non-mycorrhized roots.</text>
</comment>
<comment type="induction">
    <text evidence="4">Accumulates during arbuscular mycorrhiza (AM) formation after inoculation with AM fungi (e.g. Glomus intraradices).</text>
</comment>
<comment type="miscellaneous">
    <text evidence="6">Although related to the sugar transporter family, it does not transport sugars.</text>
</comment>
<comment type="similarity">
    <text evidence="6">Belongs to the major facilitator superfamily. Phosphate:H(+) symporter (TC 2.A.1.9) family.</text>
</comment>
<organism>
    <name type="scientific">Petunia hybrida</name>
    <name type="common">Petunia</name>
    <dbReference type="NCBI Taxonomy" id="4102"/>
    <lineage>
        <taxon>Eukaryota</taxon>
        <taxon>Viridiplantae</taxon>
        <taxon>Streptophyta</taxon>
        <taxon>Embryophyta</taxon>
        <taxon>Tracheophyta</taxon>
        <taxon>Spermatophyta</taxon>
        <taxon>Magnoliopsida</taxon>
        <taxon>eudicotyledons</taxon>
        <taxon>Gunneridae</taxon>
        <taxon>Pentapetalae</taxon>
        <taxon>asterids</taxon>
        <taxon>lamiids</taxon>
        <taxon>Solanales</taxon>
        <taxon>Solanaceae</taxon>
        <taxon>Petunioideae</taxon>
        <taxon>Petunia</taxon>
    </lineage>
</organism>
<sequence>MAKDQLQVLNALDVAKTQLYHFTAIVIAGMGFFTDAYDLFCISLVTKLLGRIYYFHEGAPKPGILPSGISAAVNGVAFIGTLSGQLFFGWLGDKLGRKKVYGMTLMLMVICSIACGLSFGKTANGVIATLCFFRFWLGFGIGGDYPLSATIMSEYANKKTRGAFIAAVFAMQGFGILAGGIVALIVSAGFKNAYPAPTYSAHGKDSTPPEADYVWRIIVMIGALPALLTYYWRMKMPETARYTALVAKNTVKAAADMSKVLNVEIEEDKATVEKIEENGNSFGLFSKEFLRRHGLHLLGTTSTWFLLDIAFYSQNLFQKDIFSKIGWIPPPETMNALDEVFRIARAQTLIALCSTVPGYWFTVAFIDKMGRFAIQLMGSFFMTVFMFALAIPYDHWTKKENRIGFVIMYSLTFFFANFGPNATTFVVPAEIFPARLRSTCHGISAAAGKAGAIVGAFGFLYAAQSTDPKKVDAGYPTGIGVKNALIVLGCVNFLGMLSTLLVPESKGKSLEEMSKENEGEEENYGTETKGENAQTVPV</sequence>
<name>PHT13_PETHY</name>
<feature type="chain" id="PRO_0000450038" description="Low affinity inorganic phosphate transporter 3">
    <location>
        <begin position="1"/>
        <end position="538"/>
    </location>
</feature>
<feature type="topological domain" description="Cytoplasmic" evidence="6">
    <location>
        <begin position="1"/>
        <end position="24"/>
    </location>
</feature>
<feature type="transmembrane region" description="Helical; Name=1" evidence="2">
    <location>
        <begin position="25"/>
        <end position="45"/>
    </location>
</feature>
<feature type="topological domain" description="Extracellular" evidence="6">
    <location>
        <begin position="46"/>
        <end position="70"/>
    </location>
</feature>
<feature type="transmembrane region" description="Helical; Name=2" evidence="2">
    <location>
        <begin position="71"/>
        <end position="91"/>
    </location>
</feature>
<feature type="topological domain" description="Cytoplasmic" evidence="6">
    <location>
        <begin position="92"/>
        <end position="99"/>
    </location>
</feature>
<feature type="transmembrane region" description="Helical; Name=3" evidence="2">
    <location>
        <begin position="100"/>
        <end position="120"/>
    </location>
</feature>
<feature type="topological domain" description="Extracellular" evidence="6">
    <location>
        <begin position="121"/>
        <end position="122"/>
    </location>
</feature>
<feature type="transmembrane region" description="Helical; Name=4" evidence="2">
    <location>
        <begin position="123"/>
        <end position="143"/>
    </location>
</feature>
<feature type="topological domain" description="Cytoplasmic" evidence="6">
    <location>
        <begin position="144"/>
        <end position="164"/>
    </location>
</feature>
<feature type="transmembrane region" description="Helical; Name=5" evidence="2">
    <location>
        <begin position="165"/>
        <end position="185"/>
    </location>
</feature>
<feature type="topological domain" description="Extracellular" evidence="6">
    <location>
        <begin position="186"/>
        <end position="211"/>
    </location>
</feature>
<feature type="transmembrane region" description="Helical; Name=6" evidence="2">
    <location>
        <begin position="212"/>
        <end position="232"/>
    </location>
</feature>
<feature type="topological domain" description="Cytoplasmic" evidence="6">
    <location>
        <begin position="233"/>
        <end position="292"/>
    </location>
</feature>
<feature type="transmembrane region" description="Helical; Name=7" evidence="2">
    <location>
        <begin position="293"/>
        <end position="313"/>
    </location>
</feature>
<feature type="topological domain" description="Extracellular" evidence="6">
    <location>
        <begin position="314"/>
        <end position="345"/>
    </location>
</feature>
<feature type="transmembrane region" description="Helical; Name=8" evidence="2">
    <location>
        <begin position="346"/>
        <end position="366"/>
    </location>
</feature>
<feature type="topological domain" description="Cytoplasmic" evidence="6">
    <location>
        <begin position="367"/>
        <end position="371"/>
    </location>
</feature>
<feature type="transmembrane region" description="Helical; Name=9" evidence="2">
    <location>
        <begin position="372"/>
        <end position="392"/>
    </location>
</feature>
<feature type="topological domain" description="Extracellular" evidence="6">
    <location>
        <begin position="393"/>
        <end position="402"/>
    </location>
</feature>
<feature type="transmembrane region" description="Helical; Name=10" evidence="2">
    <location>
        <begin position="403"/>
        <end position="423"/>
    </location>
</feature>
<feature type="topological domain" description="Cytoplasmic" evidence="6">
    <location>
        <begin position="424"/>
        <end position="442"/>
    </location>
</feature>
<feature type="transmembrane region" description="Helical; Name=11" evidence="2">
    <location>
        <begin position="443"/>
        <end position="463"/>
    </location>
</feature>
<feature type="topological domain" description="Extracellular" evidence="6">
    <location>
        <begin position="464"/>
        <end position="483"/>
    </location>
</feature>
<feature type="transmembrane region" description="Helical; Name=12" evidence="2">
    <location>
        <begin position="484"/>
        <end position="504"/>
    </location>
</feature>
<feature type="topological domain" description="Cytoplasmic" evidence="6">
    <location>
        <begin position="505"/>
        <end position="538"/>
    </location>
</feature>
<feature type="region of interest" description="Disordered" evidence="3">
    <location>
        <begin position="506"/>
        <end position="538"/>
    </location>
</feature>
<feature type="compositionally biased region" description="Basic and acidic residues" evidence="3">
    <location>
        <begin position="506"/>
        <end position="517"/>
    </location>
</feature>
<gene>
    <name evidence="5" type="primary">PT3</name>
</gene>
<accession>B2CPI5</accession>
<protein>
    <recommendedName>
        <fullName evidence="5">Low affinity inorganic phosphate transporter 3</fullName>
        <shortName evidence="5">PhPT3</shortName>
        <shortName evidence="6">PhPht1;3</shortName>
    </recommendedName>
    <alternativeName>
        <fullName evidence="6">Arbuscular mycorrhiza-induced phosphate transporter PT3</fullName>
        <shortName evidence="6">AM-induced phosphate transporter PT3</shortName>
    </alternativeName>
    <alternativeName>
        <fullName evidence="6">H(+)/Pi cotransporter PT3</fullName>
    </alternativeName>
</protein>
<evidence type="ECO:0000250" key="1">
    <source>
        <dbReference type="UniProtKB" id="Q8GSG4"/>
    </source>
</evidence>
<evidence type="ECO:0000255" key="2"/>
<evidence type="ECO:0000256" key="3">
    <source>
        <dbReference type="SAM" id="MobiDB-lite"/>
    </source>
</evidence>
<evidence type="ECO:0000269" key="4">
    <source>
    </source>
</evidence>
<evidence type="ECO:0000303" key="5">
    <source>
    </source>
</evidence>
<evidence type="ECO:0000305" key="6"/>
<evidence type="ECO:0000305" key="7">
    <source>
    </source>
</evidence>
<keyword id="KW-1003">Cell membrane</keyword>
<keyword id="KW-0472">Membrane</keyword>
<keyword id="KW-0592">Phosphate transport</keyword>
<keyword id="KW-0769">Symport</keyword>
<keyword id="KW-0812">Transmembrane</keyword>
<keyword id="KW-1133">Transmembrane helix</keyword>
<keyword id="KW-0813">Transport</keyword>
<proteinExistence type="evidence at transcript level"/>
<reference key="1">
    <citation type="journal article" date="2008" name="Plant J.">
        <title>A transgenic dTph1 insertional mutagenesis system for forward genetics in mycorrhizal phosphate transport of Petunia.</title>
        <authorList>
            <person name="Wegmueller S."/>
            <person name="Svistoonoff S."/>
            <person name="Reinhardt D."/>
            <person name="Stuurman J."/>
            <person name="Amrhein N."/>
            <person name="Bucher M."/>
        </authorList>
    </citation>
    <scope>NUCLEOTIDE SEQUENCE [GENOMIC DNA]</scope>
    <scope>INDUCTION BY ARBUSCULAR MYCORRHIZAL FUNGI</scope>
    <scope>TISSUE SPECIFICITY</scope>
    <source>
        <strain>cv. W115</strain>
        <strain>cv. W138</strain>
    </source>
</reference>